<gene>
    <name evidence="1" type="primary">rplT</name>
    <name type="ordered locus">Sez_0859</name>
</gene>
<dbReference type="EMBL" id="CP001129">
    <property type="protein sequence ID" value="ACG62218.1"/>
    <property type="molecule type" value="Genomic_DNA"/>
</dbReference>
<dbReference type="RefSeq" id="WP_000124834.1">
    <property type="nucleotide sequence ID" value="NC_011134.1"/>
</dbReference>
<dbReference type="SMR" id="B4U2K1"/>
<dbReference type="GeneID" id="93963366"/>
<dbReference type="KEGG" id="sez:Sez_0859"/>
<dbReference type="HOGENOM" id="CLU_123265_0_1_9"/>
<dbReference type="Proteomes" id="UP000001873">
    <property type="component" value="Chromosome"/>
</dbReference>
<dbReference type="GO" id="GO:1990904">
    <property type="term" value="C:ribonucleoprotein complex"/>
    <property type="evidence" value="ECO:0007669"/>
    <property type="project" value="UniProtKB-KW"/>
</dbReference>
<dbReference type="GO" id="GO:0005840">
    <property type="term" value="C:ribosome"/>
    <property type="evidence" value="ECO:0007669"/>
    <property type="project" value="UniProtKB-KW"/>
</dbReference>
<dbReference type="GO" id="GO:0019843">
    <property type="term" value="F:rRNA binding"/>
    <property type="evidence" value="ECO:0007669"/>
    <property type="project" value="UniProtKB-UniRule"/>
</dbReference>
<dbReference type="GO" id="GO:0003735">
    <property type="term" value="F:structural constituent of ribosome"/>
    <property type="evidence" value="ECO:0007669"/>
    <property type="project" value="InterPro"/>
</dbReference>
<dbReference type="GO" id="GO:0000027">
    <property type="term" value="P:ribosomal large subunit assembly"/>
    <property type="evidence" value="ECO:0007669"/>
    <property type="project" value="UniProtKB-UniRule"/>
</dbReference>
<dbReference type="GO" id="GO:0006412">
    <property type="term" value="P:translation"/>
    <property type="evidence" value="ECO:0007669"/>
    <property type="project" value="InterPro"/>
</dbReference>
<dbReference type="CDD" id="cd07026">
    <property type="entry name" value="Ribosomal_L20"/>
    <property type="match status" value="1"/>
</dbReference>
<dbReference type="FunFam" id="1.10.1900.20:FF:000001">
    <property type="entry name" value="50S ribosomal protein L20"/>
    <property type="match status" value="1"/>
</dbReference>
<dbReference type="Gene3D" id="6.10.160.10">
    <property type="match status" value="1"/>
</dbReference>
<dbReference type="Gene3D" id="1.10.1900.20">
    <property type="entry name" value="Ribosomal protein L20"/>
    <property type="match status" value="1"/>
</dbReference>
<dbReference type="HAMAP" id="MF_00382">
    <property type="entry name" value="Ribosomal_bL20"/>
    <property type="match status" value="1"/>
</dbReference>
<dbReference type="InterPro" id="IPR005813">
    <property type="entry name" value="Ribosomal_bL20"/>
</dbReference>
<dbReference type="InterPro" id="IPR049946">
    <property type="entry name" value="RIBOSOMAL_L20_CS"/>
</dbReference>
<dbReference type="InterPro" id="IPR035566">
    <property type="entry name" value="Ribosomal_protein_bL20_C"/>
</dbReference>
<dbReference type="NCBIfam" id="TIGR01032">
    <property type="entry name" value="rplT_bact"/>
    <property type="match status" value="1"/>
</dbReference>
<dbReference type="PANTHER" id="PTHR10986">
    <property type="entry name" value="39S RIBOSOMAL PROTEIN L20"/>
    <property type="match status" value="1"/>
</dbReference>
<dbReference type="Pfam" id="PF00453">
    <property type="entry name" value="Ribosomal_L20"/>
    <property type="match status" value="1"/>
</dbReference>
<dbReference type="PRINTS" id="PR00062">
    <property type="entry name" value="RIBOSOMALL20"/>
</dbReference>
<dbReference type="SUPFAM" id="SSF74731">
    <property type="entry name" value="Ribosomal protein L20"/>
    <property type="match status" value="1"/>
</dbReference>
<dbReference type="PROSITE" id="PS00937">
    <property type="entry name" value="RIBOSOMAL_L20"/>
    <property type="match status" value="1"/>
</dbReference>
<proteinExistence type="inferred from homology"/>
<accession>B4U2K1</accession>
<comment type="function">
    <text evidence="1">Binds directly to 23S ribosomal RNA and is necessary for the in vitro assembly process of the 50S ribosomal subunit. It is not involved in the protein synthesizing functions of that subunit.</text>
</comment>
<comment type="similarity">
    <text evidence="1">Belongs to the bacterial ribosomal protein bL20 family.</text>
</comment>
<organism>
    <name type="scientific">Streptococcus equi subsp. zooepidemicus (strain MGCS10565)</name>
    <dbReference type="NCBI Taxonomy" id="552526"/>
    <lineage>
        <taxon>Bacteria</taxon>
        <taxon>Bacillati</taxon>
        <taxon>Bacillota</taxon>
        <taxon>Bacilli</taxon>
        <taxon>Lactobacillales</taxon>
        <taxon>Streptococcaceae</taxon>
        <taxon>Streptococcus</taxon>
    </lineage>
</organism>
<sequence>MARVKGGVVSRKRRKRILKLAKGYYGAKHILFRTAKEQVMNSYYYAYRDRRQKKRDFRKLWITRINAAARMNGLSYSQLMHGLKLAEIEVNRKMLADLAVNDAAAFTALADAAKAKLGK</sequence>
<feature type="chain" id="PRO_1000122374" description="Large ribosomal subunit protein bL20">
    <location>
        <begin position="1"/>
        <end position="119"/>
    </location>
</feature>
<name>RL20_STREM</name>
<evidence type="ECO:0000255" key="1">
    <source>
        <dbReference type="HAMAP-Rule" id="MF_00382"/>
    </source>
</evidence>
<evidence type="ECO:0000305" key="2"/>
<protein>
    <recommendedName>
        <fullName evidence="1">Large ribosomal subunit protein bL20</fullName>
    </recommendedName>
    <alternativeName>
        <fullName evidence="2">50S ribosomal protein L20</fullName>
    </alternativeName>
</protein>
<keyword id="KW-0687">Ribonucleoprotein</keyword>
<keyword id="KW-0689">Ribosomal protein</keyword>
<keyword id="KW-0694">RNA-binding</keyword>
<keyword id="KW-0699">rRNA-binding</keyword>
<reference key="1">
    <citation type="journal article" date="2008" name="PLoS ONE">
        <title>Genome sequence of a lancefield group C Streptococcus zooepidemicus strain causing epidemic nephritis: new information about an old disease.</title>
        <authorList>
            <person name="Beres S.B."/>
            <person name="Sesso R."/>
            <person name="Pinto S.W.L."/>
            <person name="Hoe N.P."/>
            <person name="Porcella S.F."/>
            <person name="Deleo F.R."/>
            <person name="Musser J.M."/>
        </authorList>
    </citation>
    <scope>NUCLEOTIDE SEQUENCE [LARGE SCALE GENOMIC DNA]</scope>
    <source>
        <strain>MGCS10565</strain>
    </source>
</reference>